<evidence type="ECO:0000255" key="1">
    <source>
        <dbReference type="HAMAP-Rule" id="MF_00060"/>
    </source>
</evidence>
<comment type="function">
    <text evidence="1">Nucleotidase that shows phosphatase activity on nucleoside 5'-monophosphates.</text>
</comment>
<comment type="catalytic activity">
    <reaction evidence="1">
        <text>a ribonucleoside 5'-phosphate + H2O = a ribonucleoside + phosphate</text>
        <dbReference type="Rhea" id="RHEA:12484"/>
        <dbReference type="ChEBI" id="CHEBI:15377"/>
        <dbReference type="ChEBI" id="CHEBI:18254"/>
        <dbReference type="ChEBI" id="CHEBI:43474"/>
        <dbReference type="ChEBI" id="CHEBI:58043"/>
        <dbReference type="EC" id="3.1.3.5"/>
    </reaction>
</comment>
<comment type="cofactor">
    <cofactor evidence="1">
        <name>a divalent metal cation</name>
        <dbReference type="ChEBI" id="CHEBI:60240"/>
    </cofactor>
    <text evidence="1">Binds 1 divalent metal cation per subunit.</text>
</comment>
<comment type="subcellular location">
    <subcellularLocation>
        <location evidence="1">Cytoplasm</location>
    </subcellularLocation>
</comment>
<comment type="similarity">
    <text evidence="1">Belongs to the SurE nucleotidase family.</text>
</comment>
<proteinExistence type="inferred from homology"/>
<keyword id="KW-0963">Cytoplasm</keyword>
<keyword id="KW-0378">Hydrolase</keyword>
<keyword id="KW-0479">Metal-binding</keyword>
<keyword id="KW-0547">Nucleotide-binding</keyword>
<keyword id="KW-1185">Reference proteome</keyword>
<organism>
    <name type="scientific">Shewanella sediminis (strain HAW-EB3)</name>
    <dbReference type="NCBI Taxonomy" id="425104"/>
    <lineage>
        <taxon>Bacteria</taxon>
        <taxon>Pseudomonadati</taxon>
        <taxon>Pseudomonadota</taxon>
        <taxon>Gammaproteobacteria</taxon>
        <taxon>Alteromonadales</taxon>
        <taxon>Shewanellaceae</taxon>
        <taxon>Shewanella</taxon>
    </lineage>
</organism>
<name>SURE_SHESH</name>
<accession>A8FST3</accession>
<gene>
    <name evidence="1" type="primary">surE</name>
    <name type="ordered locus">Ssed_1295</name>
</gene>
<reference key="1">
    <citation type="submission" date="2007-08" db="EMBL/GenBank/DDBJ databases">
        <title>Complete sequence of Shewanella sediminis HAW-EB3.</title>
        <authorList>
            <consortium name="US DOE Joint Genome Institute"/>
            <person name="Copeland A."/>
            <person name="Lucas S."/>
            <person name="Lapidus A."/>
            <person name="Barry K."/>
            <person name="Glavina del Rio T."/>
            <person name="Dalin E."/>
            <person name="Tice H."/>
            <person name="Pitluck S."/>
            <person name="Chertkov O."/>
            <person name="Brettin T."/>
            <person name="Bruce D."/>
            <person name="Detter J.C."/>
            <person name="Han C."/>
            <person name="Schmutz J."/>
            <person name="Larimer F."/>
            <person name="Land M."/>
            <person name="Hauser L."/>
            <person name="Kyrpides N."/>
            <person name="Kim E."/>
            <person name="Zhao J.-S."/>
            <person name="Richardson P."/>
        </authorList>
    </citation>
    <scope>NUCLEOTIDE SEQUENCE [LARGE SCALE GENOMIC DNA]</scope>
    <source>
        <strain>HAW-EB3</strain>
    </source>
</reference>
<dbReference type="EC" id="3.1.3.5" evidence="1"/>
<dbReference type="EMBL" id="CP000821">
    <property type="protein sequence ID" value="ABV35906.1"/>
    <property type="molecule type" value="Genomic_DNA"/>
</dbReference>
<dbReference type="RefSeq" id="WP_012141642.1">
    <property type="nucleotide sequence ID" value="NC_009831.1"/>
</dbReference>
<dbReference type="SMR" id="A8FST3"/>
<dbReference type="STRING" id="425104.Ssed_1295"/>
<dbReference type="KEGG" id="sse:Ssed_1295"/>
<dbReference type="eggNOG" id="COG0496">
    <property type="taxonomic scope" value="Bacteria"/>
</dbReference>
<dbReference type="HOGENOM" id="CLU_045192_1_2_6"/>
<dbReference type="OrthoDB" id="9780815at2"/>
<dbReference type="Proteomes" id="UP000002015">
    <property type="component" value="Chromosome"/>
</dbReference>
<dbReference type="GO" id="GO:0005737">
    <property type="term" value="C:cytoplasm"/>
    <property type="evidence" value="ECO:0007669"/>
    <property type="project" value="UniProtKB-SubCell"/>
</dbReference>
<dbReference type="GO" id="GO:0008254">
    <property type="term" value="F:3'-nucleotidase activity"/>
    <property type="evidence" value="ECO:0007669"/>
    <property type="project" value="TreeGrafter"/>
</dbReference>
<dbReference type="GO" id="GO:0008253">
    <property type="term" value="F:5'-nucleotidase activity"/>
    <property type="evidence" value="ECO:0007669"/>
    <property type="project" value="UniProtKB-UniRule"/>
</dbReference>
<dbReference type="GO" id="GO:0004309">
    <property type="term" value="F:exopolyphosphatase activity"/>
    <property type="evidence" value="ECO:0007669"/>
    <property type="project" value="TreeGrafter"/>
</dbReference>
<dbReference type="GO" id="GO:0046872">
    <property type="term" value="F:metal ion binding"/>
    <property type="evidence" value="ECO:0007669"/>
    <property type="project" value="UniProtKB-UniRule"/>
</dbReference>
<dbReference type="GO" id="GO:0000166">
    <property type="term" value="F:nucleotide binding"/>
    <property type="evidence" value="ECO:0007669"/>
    <property type="project" value="UniProtKB-KW"/>
</dbReference>
<dbReference type="FunFam" id="3.40.1210.10:FF:000001">
    <property type="entry name" value="5'/3'-nucleotidase SurE"/>
    <property type="match status" value="1"/>
</dbReference>
<dbReference type="Gene3D" id="3.40.1210.10">
    <property type="entry name" value="Survival protein SurE-like phosphatase/nucleotidase"/>
    <property type="match status" value="1"/>
</dbReference>
<dbReference type="HAMAP" id="MF_00060">
    <property type="entry name" value="SurE"/>
    <property type="match status" value="1"/>
</dbReference>
<dbReference type="InterPro" id="IPR030048">
    <property type="entry name" value="SurE"/>
</dbReference>
<dbReference type="InterPro" id="IPR002828">
    <property type="entry name" value="SurE-like_Pase/nucleotidase"/>
</dbReference>
<dbReference type="InterPro" id="IPR036523">
    <property type="entry name" value="SurE-like_sf"/>
</dbReference>
<dbReference type="NCBIfam" id="NF001489">
    <property type="entry name" value="PRK00346.1-3"/>
    <property type="match status" value="1"/>
</dbReference>
<dbReference type="NCBIfam" id="NF001490">
    <property type="entry name" value="PRK00346.1-4"/>
    <property type="match status" value="1"/>
</dbReference>
<dbReference type="NCBIfam" id="TIGR00087">
    <property type="entry name" value="surE"/>
    <property type="match status" value="1"/>
</dbReference>
<dbReference type="PANTHER" id="PTHR30457">
    <property type="entry name" value="5'-NUCLEOTIDASE SURE"/>
    <property type="match status" value="1"/>
</dbReference>
<dbReference type="PANTHER" id="PTHR30457:SF12">
    <property type="entry name" value="5'_3'-NUCLEOTIDASE SURE"/>
    <property type="match status" value="1"/>
</dbReference>
<dbReference type="Pfam" id="PF01975">
    <property type="entry name" value="SurE"/>
    <property type="match status" value="1"/>
</dbReference>
<dbReference type="SUPFAM" id="SSF64167">
    <property type="entry name" value="SurE-like"/>
    <property type="match status" value="1"/>
</dbReference>
<protein>
    <recommendedName>
        <fullName evidence="1">5'-nucleotidase SurE</fullName>
        <ecNumber evidence="1">3.1.3.5</ecNumber>
    </recommendedName>
    <alternativeName>
        <fullName evidence="1">Nucleoside 5'-monophosphate phosphohydrolase</fullName>
    </alternativeName>
</protein>
<feature type="chain" id="PRO_0000335278" description="5'-nucleotidase SurE">
    <location>
        <begin position="1"/>
        <end position="249"/>
    </location>
</feature>
<feature type="binding site" evidence="1">
    <location>
        <position position="9"/>
    </location>
    <ligand>
        <name>a divalent metal cation</name>
        <dbReference type="ChEBI" id="CHEBI:60240"/>
    </ligand>
</feature>
<feature type="binding site" evidence="1">
    <location>
        <position position="10"/>
    </location>
    <ligand>
        <name>a divalent metal cation</name>
        <dbReference type="ChEBI" id="CHEBI:60240"/>
    </ligand>
</feature>
<feature type="binding site" evidence="1">
    <location>
        <position position="40"/>
    </location>
    <ligand>
        <name>a divalent metal cation</name>
        <dbReference type="ChEBI" id="CHEBI:60240"/>
    </ligand>
</feature>
<feature type="binding site" evidence="1">
    <location>
        <position position="92"/>
    </location>
    <ligand>
        <name>a divalent metal cation</name>
        <dbReference type="ChEBI" id="CHEBI:60240"/>
    </ligand>
</feature>
<sequence>MIKILVSNDDGVTAPGIKALSDALSTSYQVMTVGPDRNCSGASNSLTLTNPLRINTLSNGYVSVSGTPTDCVHLAIRELYTDEPDMVVSGINAGANLGDDTLYSGTVAAAMEGRFLGLPAIAISLVGSTLTHYETAAHFACKVIAGLLKKPIAQDQILNINVPDLPIEQVKGIRVTRLGARHKAEGMIRTQDPAGRDIFWLGPPGDEQDASDGTDFHAVTNGYVSVTPLTVDLTAFEQISTMQQWIDKI</sequence>